<sequence length="465" mass="53268">MFIYDTKSKQKVPFEPLVKNKANIYVCGPTVYDDAHLGHARSAIAFDLLRRTLELSGYEVMLVRNFTDIDDKIINKALKENKSIQELSSIYIESYTRDLNALNVKKPSLEPKASEYLDAMVHMIETLLEKNIAYRVSNGDIYLDTSKDKDYGSLSVHNSSIEFGRIGLVQEKRLEQDFVLWKSYKGDNDVGFDSPLGKGRPGWHIECSSMVFETLALANTPYQIDIHAGGSDLLFPHHENEACQTRCAFGVELAKYWMHNGFVNINNEKMSKSLGNSFFVKDALKNYDGEILRNYLLGVHYRSVLNFNEEDLLVSKKRLDKIYRLKQRVLGTLGGINPNFKKEILECMQDDLNVSKALSVLENMLSSTNEKLDQNPKNKALKGEILANLKFVEELLGIGFKDPSAYFQLGVSESEKQEIENKIEERKRAKEQKDFLKADRIREELLNRKIALMDTPQGTIWEKFF</sequence>
<gene>
    <name evidence="1" type="primary">cysS</name>
    <name type="ordered locus">HPAG1_0866</name>
</gene>
<name>SYC_HELPH</name>
<reference key="1">
    <citation type="journal article" date="2006" name="Proc. Natl. Acad. Sci. U.S.A.">
        <title>The complete genome sequence of a chronic atrophic gastritis Helicobacter pylori strain: evolution during disease progression.</title>
        <authorList>
            <person name="Oh J.D."/>
            <person name="Kling-Baeckhed H."/>
            <person name="Giannakis M."/>
            <person name="Xu J."/>
            <person name="Fulton R.S."/>
            <person name="Fulton L.A."/>
            <person name="Cordum H.S."/>
            <person name="Wang C."/>
            <person name="Elliott G."/>
            <person name="Edwards J."/>
            <person name="Mardis E.R."/>
            <person name="Engstrand L.G."/>
            <person name="Gordon J.I."/>
        </authorList>
    </citation>
    <scope>NUCLEOTIDE SEQUENCE [LARGE SCALE GENOMIC DNA]</scope>
    <source>
        <strain>HPAG1</strain>
    </source>
</reference>
<keyword id="KW-0030">Aminoacyl-tRNA synthetase</keyword>
<keyword id="KW-0067">ATP-binding</keyword>
<keyword id="KW-0963">Cytoplasm</keyword>
<keyword id="KW-0436">Ligase</keyword>
<keyword id="KW-0479">Metal-binding</keyword>
<keyword id="KW-0547">Nucleotide-binding</keyword>
<keyword id="KW-0648">Protein biosynthesis</keyword>
<keyword id="KW-0862">Zinc</keyword>
<proteinExistence type="inferred from homology"/>
<organism>
    <name type="scientific">Helicobacter pylori (strain HPAG1)</name>
    <dbReference type="NCBI Taxonomy" id="357544"/>
    <lineage>
        <taxon>Bacteria</taxon>
        <taxon>Pseudomonadati</taxon>
        <taxon>Campylobacterota</taxon>
        <taxon>Epsilonproteobacteria</taxon>
        <taxon>Campylobacterales</taxon>
        <taxon>Helicobacteraceae</taxon>
        <taxon>Helicobacter</taxon>
    </lineage>
</organism>
<accession>Q1CSY9</accession>
<comment type="catalytic activity">
    <reaction evidence="1">
        <text>tRNA(Cys) + L-cysteine + ATP = L-cysteinyl-tRNA(Cys) + AMP + diphosphate</text>
        <dbReference type="Rhea" id="RHEA:17773"/>
        <dbReference type="Rhea" id="RHEA-COMP:9661"/>
        <dbReference type="Rhea" id="RHEA-COMP:9679"/>
        <dbReference type="ChEBI" id="CHEBI:30616"/>
        <dbReference type="ChEBI" id="CHEBI:33019"/>
        <dbReference type="ChEBI" id="CHEBI:35235"/>
        <dbReference type="ChEBI" id="CHEBI:78442"/>
        <dbReference type="ChEBI" id="CHEBI:78517"/>
        <dbReference type="ChEBI" id="CHEBI:456215"/>
        <dbReference type="EC" id="6.1.1.16"/>
    </reaction>
</comment>
<comment type="cofactor">
    <cofactor evidence="1">
        <name>Zn(2+)</name>
        <dbReference type="ChEBI" id="CHEBI:29105"/>
    </cofactor>
    <text evidence="1">Binds 1 zinc ion per subunit.</text>
</comment>
<comment type="subunit">
    <text evidence="1">Monomer.</text>
</comment>
<comment type="subcellular location">
    <subcellularLocation>
        <location evidence="1">Cytoplasm</location>
    </subcellularLocation>
</comment>
<comment type="similarity">
    <text evidence="1">Belongs to the class-I aminoacyl-tRNA synthetase family.</text>
</comment>
<feature type="chain" id="PRO_1000006588" description="Cysteine--tRNA ligase">
    <location>
        <begin position="1"/>
        <end position="465"/>
    </location>
</feature>
<feature type="short sequence motif" description="'HIGH' region">
    <location>
        <begin position="29"/>
        <end position="39"/>
    </location>
</feature>
<feature type="short sequence motif" description="'KMSKS' region">
    <location>
        <begin position="269"/>
        <end position="273"/>
    </location>
</feature>
<feature type="binding site" evidence="1">
    <location>
        <position position="27"/>
    </location>
    <ligand>
        <name>Zn(2+)</name>
        <dbReference type="ChEBI" id="CHEBI:29105"/>
    </ligand>
</feature>
<feature type="binding site" evidence="1">
    <location>
        <position position="207"/>
    </location>
    <ligand>
        <name>Zn(2+)</name>
        <dbReference type="ChEBI" id="CHEBI:29105"/>
    </ligand>
</feature>
<feature type="binding site" evidence="1">
    <location>
        <position position="237"/>
    </location>
    <ligand>
        <name>Zn(2+)</name>
        <dbReference type="ChEBI" id="CHEBI:29105"/>
    </ligand>
</feature>
<feature type="binding site" evidence="1">
    <location>
        <position position="241"/>
    </location>
    <ligand>
        <name>Zn(2+)</name>
        <dbReference type="ChEBI" id="CHEBI:29105"/>
    </ligand>
</feature>
<feature type="binding site" evidence="1">
    <location>
        <position position="272"/>
    </location>
    <ligand>
        <name>ATP</name>
        <dbReference type="ChEBI" id="CHEBI:30616"/>
    </ligand>
</feature>
<evidence type="ECO:0000255" key="1">
    <source>
        <dbReference type="HAMAP-Rule" id="MF_00041"/>
    </source>
</evidence>
<dbReference type="EC" id="6.1.1.16" evidence="1"/>
<dbReference type="EMBL" id="CP000241">
    <property type="protein sequence ID" value="ABF84933.1"/>
    <property type="molecule type" value="Genomic_DNA"/>
</dbReference>
<dbReference type="RefSeq" id="WP_000471388.1">
    <property type="nucleotide sequence ID" value="NC_008086.1"/>
</dbReference>
<dbReference type="SMR" id="Q1CSY9"/>
<dbReference type="KEGG" id="hpa:HPAG1_0866"/>
<dbReference type="HOGENOM" id="CLU_013528_0_1_7"/>
<dbReference type="GO" id="GO:0005829">
    <property type="term" value="C:cytosol"/>
    <property type="evidence" value="ECO:0007669"/>
    <property type="project" value="TreeGrafter"/>
</dbReference>
<dbReference type="GO" id="GO:0005524">
    <property type="term" value="F:ATP binding"/>
    <property type="evidence" value="ECO:0007669"/>
    <property type="project" value="UniProtKB-UniRule"/>
</dbReference>
<dbReference type="GO" id="GO:0004817">
    <property type="term" value="F:cysteine-tRNA ligase activity"/>
    <property type="evidence" value="ECO:0007669"/>
    <property type="project" value="UniProtKB-UniRule"/>
</dbReference>
<dbReference type="GO" id="GO:0008270">
    <property type="term" value="F:zinc ion binding"/>
    <property type="evidence" value="ECO:0007669"/>
    <property type="project" value="UniProtKB-UniRule"/>
</dbReference>
<dbReference type="GO" id="GO:0006423">
    <property type="term" value="P:cysteinyl-tRNA aminoacylation"/>
    <property type="evidence" value="ECO:0007669"/>
    <property type="project" value="UniProtKB-UniRule"/>
</dbReference>
<dbReference type="CDD" id="cd00672">
    <property type="entry name" value="CysRS_core"/>
    <property type="match status" value="1"/>
</dbReference>
<dbReference type="FunFam" id="1.20.120.1910:FF:000013">
    <property type="entry name" value="Cysteine--tRNA ligase"/>
    <property type="match status" value="1"/>
</dbReference>
<dbReference type="FunFam" id="3.40.50.620:FF:000339">
    <property type="entry name" value="Cysteine--tRNA ligase"/>
    <property type="match status" value="1"/>
</dbReference>
<dbReference type="Gene3D" id="1.20.120.1910">
    <property type="entry name" value="Cysteine-tRNA ligase, C-terminal anti-codon recognition domain"/>
    <property type="match status" value="1"/>
</dbReference>
<dbReference type="Gene3D" id="3.40.50.620">
    <property type="entry name" value="HUPs"/>
    <property type="match status" value="1"/>
</dbReference>
<dbReference type="HAMAP" id="MF_00041">
    <property type="entry name" value="Cys_tRNA_synth"/>
    <property type="match status" value="1"/>
</dbReference>
<dbReference type="InterPro" id="IPR015803">
    <property type="entry name" value="Cys-tRNA-ligase"/>
</dbReference>
<dbReference type="InterPro" id="IPR015273">
    <property type="entry name" value="Cys-tRNA-synt_Ia_DALR"/>
</dbReference>
<dbReference type="InterPro" id="IPR024909">
    <property type="entry name" value="Cys-tRNA/MSH_ligase"/>
</dbReference>
<dbReference type="InterPro" id="IPR014729">
    <property type="entry name" value="Rossmann-like_a/b/a_fold"/>
</dbReference>
<dbReference type="InterPro" id="IPR032678">
    <property type="entry name" value="tRNA-synt_1_cat_dom"/>
</dbReference>
<dbReference type="InterPro" id="IPR009080">
    <property type="entry name" value="tRNAsynth_Ia_anticodon-bd"/>
</dbReference>
<dbReference type="NCBIfam" id="TIGR00435">
    <property type="entry name" value="cysS"/>
    <property type="match status" value="1"/>
</dbReference>
<dbReference type="PANTHER" id="PTHR10890:SF3">
    <property type="entry name" value="CYSTEINE--TRNA LIGASE, CYTOPLASMIC"/>
    <property type="match status" value="1"/>
</dbReference>
<dbReference type="PANTHER" id="PTHR10890">
    <property type="entry name" value="CYSTEINYL-TRNA SYNTHETASE"/>
    <property type="match status" value="1"/>
</dbReference>
<dbReference type="Pfam" id="PF09190">
    <property type="entry name" value="DALR_2"/>
    <property type="match status" value="1"/>
</dbReference>
<dbReference type="Pfam" id="PF01406">
    <property type="entry name" value="tRNA-synt_1e"/>
    <property type="match status" value="1"/>
</dbReference>
<dbReference type="PRINTS" id="PR00983">
    <property type="entry name" value="TRNASYNTHCYS"/>
</dbReference>
<dbReference type="SMART" id="SM00840">
    <property type="entry name" value="DALR_2"/>
    <property type="match status" value="1"/>
</dbReference>
<dbReference type="SUPFAM" id="SSF47323">
    <property type="entry name" value="Anticodon-binding domain of a subclass of class I aminoacyl-tRNA synthetases"/>
    <property type="match status" value="1"/>
</dbReference>
<dbReference type="SUPFAM" id="SSF52374">
    <property type="entry name" value="Nucleotidylyl transferase"/>
    <property type="match status" value="1"/>
</dbReference>
<protein>
    <recommendedName>
        <fullName evidence="1">Cysteine--tRNA ligase</fullName>
        <ecNumber evidence="1">6.1.1.16</ecNumber>
    </recommendedName>
    <alternativeName>
        <fullName evidence="1">Cysteinyl-tRNA synthetase</fullName>
        <shortName evidence="1">CysRS</shortName>
    </alternativeName>
</protein>